<reference key="1">
    <citation type="journal article" date="2005" name="Science">
        <title>The transcriptional landscape of the mammalian genome.</title>
        <authorList>
            <person name="Carninci P."/>
            <person name="Kasukawa T."/>
            <person name="Katayama S."/>
            <person name="Gough J."/>
            <person name="Frith M.C."/>
            <person name="Maeda N."/>
            <person name="Oyama R."/>
            <person name="Ravasi T."/>
            <person name="Lenhard B."/>
            <person name="Wells C."/>
            <person name="Kodzius R."/>
            <person name="Shimokawa K."/>
            <person name="Bajic V.B."/>
            <person name="Brenner S.E."/>
            <person name="Batalov S."/>
            <person name="Forrest A.R."/>
            <person name="Zavolan M."/>
            <person name="Davis M.J."/>
            <person name="Wilming L.G."/>
            <person name="Aidinis V."/>
            <person name="Allen J.E."/>
            <person name="Ambesi-Impiombato A."/>
            <person name="Apweiler R."/>
            <person name="Aturaliya R.N."/>
            <person name="Bailey T.L."/>
            <person name="Bansal M."/>
            <person name="Baxter L."/>
            <person name="Beisel K.W."/>
            <person name="Bersano T."/>
            <person name="Bono H."/>
            <person name="Chalk A.M."/>
            <person name="Chiu K.P."/>
            <person name="Choudhary V."/>
            <person name="Christoffels A."/>
            <person name="Clutterbuck D.R."/>
            <person name="Crowe M.L."/>
            <person name="Dalla E."/>
            <person name="Dalrymple B.P."/>
            <person name="de Bono B."/>
            <person name="Della Gatta G."/>
            <person name="di Bernardo D."/>
            <person name="Down T."/>
            <person name="Engstrom P."/>
            <person name="Fagiolini M."/>
            <person name="Faulkner G."/>
            <person name="Fletcher C.F."/>
            <person name="Fukushima T."/>
            <person name="Furuno M."/>
            <person name="Futaki S."/>
            <person name="Gariboldi M."/>
            <person name="Georgii-Hemming P."/>
            <person name="Gingeras T.R."/>
            <person name="Gojobori T."/>
            <person name="Green R.E."/>
            <person name="Gustincich S."/>
            <person name="Harbers M."/>
            <person name="Hayashi Y."/>
            <person name="Hensch T.K."/>
            <person name="Hirokawa N."/>
            <person name="Hill D."/>
            <person name="Huminiecki L."/>
            <person name="Iacono M."/>
            <person name="Ikeo K."/>
            <person name="Iwama A."/>
            <person name="Ishikawa T."/>
            <person name="Jakt M."/>
            <person name="Kanapin A."/>
            <person name="Katoh M."/>
            <person name="Kawasawa Y."/>
            <person name="Kelso J."/>
            <person name="Kitamura H."/>
            <person name="Kitano H."/>
            <person name="Kollias G."/>
            <person name="Krishnan S.P."/>
            <person name="Kruger A."/>
            <person name="Kummerfeld S.K."/>
            <person name="Kurochkin I.V."/>
            <person name="Lareau L.F."/>
            <person name="Lazarevic D."/>
            <person name="Lipovich L."/>
            <person name="Liu J."/>
            <person name="Liuni S."/>
            <person name="McWilliam S."/>
            <person name="Madan Babu M."/>
            <person name="Madera M."/>
            <person name="Marchionni L."/>
            <person name="Matsuda H."/>
            <person name="Matsuzawa S."/>
            <person name="Miki H."/>
            <person name="Mignone F."/>
            <person name="Miyake S."/>
            <person name="Morris K."/>
            <person name="Mottagui-Tabar S."/>
            <person name="Mulder N."/>
            <person name="Nakano N."/>
            <person name="Nakauchi H."/>
            <person name="Ng P."/>
            <person name="Nilsson R."/>
            <person name="Nishiguchi S."/>
            <person name="Nishikawa S."/>
            <person name="Nori F."/>
            <person name="Ohara O."/>
            <person name="Okazaki Y."/>
            <person name="Orlando V."/>
            <person name="Pang K.C."/>
            <person name="Pavan W.J."/>
            <person name="Pavesi G."/>
            <person name="Pesole G."/>
            <person name="Petrovsky N."/>
            <person name="Piazza S."/>
            <person name="Reed J."/>
            <person name="Reid J.F."/>
            <person name="Ring B.Z."/>
            <person name="Ringwald M."/>
            <person name="Rost B."/>
            <person name="Ruan Y."/>
            <person name="Salzberg S.L."/>
            <person name="Sandelin A."/>
            <person name="Schneider C."/>
            <person name="Schoenbach C."/>
            <person name="Sekiguchi K."/>
            <person name="Semple C.A."/>
            <person name="Seno S."/>
            <person name="Sessa L."/>
            <person name="Sheng Y."/>
            <person name="Shibata Y."/>
            <person name="Shimada H."/>
            <person name="Shimada K."/>
            <person name="Silva D."/>
            <person name="Sinclair B."/>
            <person name="Sperling S."/>
            <person name="Stupka E."/>
            <person name="Sugiura K."/>
            <person name="Sultana R."/>
            <person name="Takenaka Y."/>
            <person name="Taki K."/>
            <person name="Tammoja K."/>
            <person name="Tan S.L."/>
            <person name="Tang S."/>
            <person name="Taylor M.S."/>
            <person name="Tegner J."/>
            <person name="Teichmann S.A."/>
            <person name="Ueda H.R."/>
            <person name="van Nimwegen E."/>
            <person name="Verardo R."/>
            <person name="Wei C.L."/>
            <person name="Yagi K."/>
            <person name="Yamanishi H."/>
            <person name="Zabarovsky E."/>
            <person name="Zhu S."/>
            <person name="Zimmer A."/>
            <person name="Hide W."/>
            <person name="Bult C."/>
            <person name="Grimmond S.M."/>
            <person name="Teasdale R.D."/>
            <person name="Liu E.T."/>
            <person name="Brusic V."/>
            <person name="Quackenbush J."/>
            <person name="Wahlestedt C."/>
            <person name="Mattick J.S."/>
            <person name="Hume D.A."/>
            <person name="Kai C."/>
            <person name="Sasaki D."/>
            <person name="Tomaru Y."/>
            <person name="Fukuda S."/>
            <person name="Kanamori-Katayama M."/>
            <person name="Suzuki M."/>
            <person name="Aoki J."/>
            <person name="Arakawa T."/>
            <person name="Iida J."/>
            <person name="Imamura K."/>
            <person name="Itoh M."/>
            <person name="Kato T."/>
            <person name="Kawaji H."/>
            <person name="Kawagashira N."/>
            <person name="Kawashima T."/>
            <person name="Kojima M."/>
            <person name="Kondo S."/>
            <person name="Konno H."/>
            <person name="Nakano K."/>
            <person name="Ninomiya N."/>
            <person name="Nishio T."/>
            <person name="Okada M."/>
            <person name="Plessy C."/>
            <person name="Shibata K."/>
            <person name="Shiraki T."/>
            <person name="Suzuki S."/>
            <person name="Tagami M."/>
            <person name="Waki K."/>
            <person name="Watahiki A."/>
            <person name="Okamura-Oho Y."/>
            <person name="Suzuki H."/>
            <person name="Kawai J."/>
            <person name="Hayashizaki Y."/>
        </authorList>
    </citation>
    <scope>NUCLEOTIDE SEQUENCE [LARGE SCALE MRNA] (ISOFORMS 1; 2 AND 3)</scope>
    <source>
        <strain>C57BL/6J</strain>
        <tissue>Embryo</tissue>
        <tissue>Kidney</tissue>
        <tissue>Lung</tissue>
    </source>
</reference>
<reference key="2">
    <citation type="journal article" date="2004" name="Genome Res.">
        <title>The status, quality, and expansion of the NIH full-length cDNA project: the Mammalian Gene Collection (MGC).</title>
        <authorList>
            <consortium name="The MGC Project Team"/>
        </authorList>
    </citation>
    <scope>NUCLEOTIDE SEQUENCE [LARGE SCALE MRNA] (ISOFORM 2)</scope>
    <source>
        <tissue>Mammary gland</tissue>
        <tissue>Testis</tissue>
    </source>
</reference>
<reference key="3">
    <citation type="journal article" date="2010" name="Cell">
        <title>A tissue-specific atlas of mouse protein phosphorylation and expression.</title>
        <authorList>
            <person name="Huttlin E.L."/>
            <person name="Jedrychowski M.P."/>
            <person name="Elias J.E."/>
            <person name="Goswami T."/>
            <person name="Rad R."/>
            <person name="Beausoleil S.A."/>
            <person name="Villen J."/>
            <person name="Haas W."/>
            <person name="Sowa M.E."/>
            <person name="Gygi S.P."/>
        </authorList>
    </citation>
    <scope>IDENTIFICATION BY MASS SPECTROMETRY [LARGE SCALE ANALYSIS]</scope>
    <source>
        <tissue>Brain</tissue>
        <tissue>Spleen</tissue>
        <tissue>Testis</tissue>
    </source>
</reference>
<accession>Q9D061</accession>
<accession>Q3TMN7</accession>
<accession>Q9DCU4</accession>
<protein>
    <recommendedName>
        <fullName>Acyl-CoA-binding domain-containing protein 6</fullName>
    </recommendedName>
</protein>
<proteinExistence type="evidence at protein level"/>
<gene>
    <name type="primary">Acbd6</name>
</gene>
<feature type="chain" id="PRO_0000232880" description="Acyl-CoA-binding domain-containing protein 6">
    <location>
        <begin position="1"/>
        <end position="282"/>
    </location>
</feature>
<feature type="domain" description="ACB" evidence="4">
    <location>
        <begin position="42"/>
        <end position="127"/>
    </location>
</feature>
<feature type="repeat" description="ANK 1">
    <location>
        <begin position="191"/>
        <end position="220"/>
    </location>
</feature>
<feature type="repeat" description="ANK 2">
    <location>
        <begin position="224"/>
        <end position="253"/>
    </location>
</feature>
<feature type="region of interest" description="Disordered" evidence="5">
    <location>
        <begin position="1"/>
        <end position="39"/>
    </location>
</feature>
<feature type="binding site" evidence="1">
    <location>
        <begin position="69"/>
        <end position="73"/>
    </location>
    <ligand>
        <name>an acyl-CoA</name>
        <dbReference type="ChEBI" id="CHEBI:58342"/>
    </ligand>
</feature>
<feature type="binding site" evidence="1">
    <location>
        <position position="95"/>
    </location>
    <ligand>
        <name>an acyl-CoA</name>
        <dbReference type="ChEBI" id="CHEBI:58342"/>
    </ligand>
</feature>
<feature type="binding site" evidence="1">
    <location>
        <position position="114"/>
    </location>
    <ligand>
        <name>an acyl-CoA</name>
        <dbReference type="ChEBI" id="CHEBI:58342"/>
    </ligand>
</feature>
<feature type="modified residue" description="Phosphoserine" evidence="2">
    <location>
        <position position="41"/>
    </location>
</feature>
<feature type="modified residue" description="Phosphoserine" evidence="3">
    <location>
        <position position="106"/>
    </location>
</feature>
<feature type="splice variant" id="VSP_018002" description="In isoform 3." evidence="7">
    <original>VSEKKGKEGSS</original>
    <variation>LSRNPTARIEV</variation>
    <location>
        <begin position="129"/>
        <end position="139"/>
    </location>
</feature>
<feature type="splice variant" id="VSP_018003" description="In isoform 2." evidence="6 7">
    <original>SEKKGKEG</original>
    <variation>PALLEFLS</variation>
    <location>
        <begin position="130"/>
        <end position="137"/>
    </location>
</feature>
<feature type="splice variant" id="VSP_018004" description="In isoform 2." evidence="6 7">
    <location>
        <begin position="138"/>
        <end position="282"/>
    </location>
</feature>
<feature type="splice variant" id="VSP_018005" description="In isoform 3." evidence="7">
    <location>
        <begin position="140"/>
        <end position="282"/>
    </location>
</feature>
<feature type="sequence conflict" description="In Ref. 1; BAB27836." evidence="8" ref="1">
    <original>E</original>
    <variation>G</variation>
    <location>
        <position position="29"/>
    </location>
</feature>
<feature type="sequence conflict" description="In Ref. 1; BAB27836." evidence="8" ref="1">
    <original>E</original>
    <variation>Q</variation>
    <location>
        <position position="44"/>
    </location>
</feature>
<organism>
    <name type="scientific">Mus musculus</name>
    <name type="common">Mouse</name>
    <dbReference type="NCBI Taxonomy" id="10090"/>
    <lineage>
        <taxon>Eukaryota</taxon>
        <taxon>Metazoa</taxon>
        <taxon>Chordata</taxon>
        <taxon>Craniata</taxon>
        <taxon>Vertebrata</taxon>
        <taxon>Euteleostomi</taxon>
        <taxon>Mammalia</taxon>
        <taxon>Eutheria</taxon>
        <taxon>Euarchontoglires</taxon>
        <taxon>Glires</taxon>
        <taxon>Rodentia</taxon>
        <taxon>Myomorpha</taxon>
        <taxon>Muroidea</taxon>
        <taxon>Muridae</taxon>
        <taxon>Murinae</taxon>
        <taxon>Mus</taxon>
        <taxon>Mus</taxon>
    </lineage>
</organism>
<dbReference type="EMBL" id="AK002470">
    <property type="protein sequence ID" value="BAB22124.1"/>
    <property type="molecule type" value="mRNA"/>
</dbReference>
<dbReference type="EMBL" id="AK011781">
    <property type="protein sequence ID" value="BAB27836.1"/>
    <property type="molecule type" value="mRNA"/>
</dbReference>
<dbReference type="EMBL" id="AK165836">
    <property type="protein sequence ID" value="BAE38404.1"/>
    <property type="molecule type" value="mRNA"/>
</dbReference>
<dbReference type="EMBL" id="BC028537">
    <property type="protein sequence ID" value="AAH28537.1"/>
    <property type="molecule type" value="mRNA"/>
</dbReference>
<dbReference type="EMBL" id="BC061029">
    <property type="protein sequence ID" value="AAH61029.1"/>
    <property type="molecule type" value="mRNA"/>
</dbReference>
<dbReference type="CCDS" id="CCDS15385.1">
    <molecule id="Q9D061-1"/>
</dbReference>
<dbReference type="CCDS" id="CCDS48397.1">
    <molecule id="Q9D061-2"/>
</dbReference>
<dbReference type="CCDS" id="CCDS48398.1">
    <molecule id="Q9D061-3"/>
</dbReference>
<dbReference type="RefSeq" id="NP_001139253.1">
    <molecule id="Q9D061-3"/>
    <property type="nucleotide sequence ID" value="NM_001145781.1"/>
</dbReference>
<dbReference type="RefSeq" id="NP_080959.1">
    <molecule id="Q9D061-2"/>
    <property type="nucleotide sequence ID" value="NM_026683.1"/>
</dbReference>
<dbReference type="RefSeq" id="NP_082526.2">
    <molecule id="Q9D061-1"/>
    <property type="nucleotide sequence ID" value="NM_028250.3"/>
</dbReference>
<dbReference type="SMR" id="Q9D061"/>
<dbReference type="FunCoup" id="Q9D061">
    <property type="interactions" value="2441"/>
</dbReference>
<dbReference type="STRING" id="10090.ENSMUSP00000049124"/>
<dbReference type="iPTMnet" id="Q9D061"/>
<dbReference type="PhosphoSitePlus" id="Q9D061"/>
<dbReference type="SwissPalm" id="Q9D061"/>
<dbReference type="PaxDb" id="10090-ENSMUSP00000049124"/>
<dbReference type="PeptideAtlas" id="Q9D061"/>
<dbReference type="ProteomicsDB" id="285634">
    <molecule id="Q9D061-1"/>
</dbReference>
<dbReference type="ProteomicsDB" id="285635">
    <molecule id="Q9D061-2"/>
</dbReference>
<dbReference type="ProteomicsDB" id="285636">
    <molecule id="Q9D061-3"/>
</dbReference>
<dbReference type="Pumba" id="Q9D061"/>
<dbReference type="Antibodypedia" id="72484">
    <property type="antibodies" value="198 antibodies from 28 providers"/>
</dbReference>
<dbReference type="DNASU" id="72482"/>
<dbReference type="Ensembl" id="ENSMUST00000035560.9">
    <molecule id="Q9D061-1"/>
    <property type="protein sequence ID" value="ENSMUSP00000049124.4"/>
    <property type="gene ID" value="ENSMUSG00000033701.14"/>
</dbReference>
<dbReference type="Ensembl" id="ENSMUST00000080138.13">
    <molecule id="Q9D061-2"/>
    <property type="protein sequence ID" value="ENSMUSP00000079035.7"/>
    <property type="gene ID" value="ENSMUSG00000033701.14"/>
</dbReference>
<dbReference type="Ensembl" id="ENSMUST00000097529.5">
    <molecule id="Q9D061-3"/>
    <property type="protein sequence ID" value="ENSMUSP00000095136.4"/>
    <property type="gene ID" value="ENSMUSG00000033701.14"/>
</dbReference>
<dbReference type="GeneID" id="72482"/>
<dbReference type="KEGG" id="mmu:72482"/>
<dbReference type="UCSC" id="uc007dbk.2">
    <molecule id="Q9D061-2"/>
    <property type="organism name" value="mouse"/>
</dbReference>
<dbReference type="UCSC" id="uc007dbl.2">
    <molecule id="Q9D061-3"/>
    <property type="organism name" value="mouse"/>
</dbReference>
<dbReference type="UCSC" id="uc011wtw.1">
    <molecule id="Q9D061-1"/>
    <property type="organism name" value="mouse"/>
</dbReference>
<dbReference type="AGR" id="MGI:1919732"/>
<dbReference type="CTD" id="84320"/>
<dbReference type="MGI" id="MGI:1919732">
    <property type="gene designation" value="Acbd6"/>
</dbReference>
<dbReference type="VEuPathDB" id="HostDB:ENSMUSG00000033701"/>
<dbReference type="eggNOG" id="KOG0817">
    <property type="taxonomic scope" value="Eukaryota"/>
</dbReference>
<dbReference type="GeneTree" id="ENSGT00940000157458"/>
<dbReference type="HOGENOM" id="CLU_1820101_0_0_1"/>
<dbReference type="InParanoid" id="Q9D061"/>
<dbReference type="OMA" id="ARSKWQA"/>
<dbReference type="OrthoDB" id="10254927at2759"/>
<dbReference type="PhylomeDB" id="Q9D061"/>
<dbReference type="TreeFam" id="TF329102"/>
<dbReference type="Reactome" id="R-MMU-77289">
    <property type="pathway name" value="Mitochondrial Fatty Acid Beta-Oxidation"/>
</dbReference>
<dbReference type="BioGRID-ORCS" id="72482">
    <property type="hits" value="3 hits in 82 CRISPR screens"/>
</dbReference>
<dbReference type="ChiTaRS" id="Acbd6">
    <property type="organism name" value="mouse"/>
</dbReference>
<dbReference type="PRO" id="PR:Q9D061"/>
<dbReference type="Proteomes" id="UP000000589">
    <property type="component" value="Chromosome 1"/>
</dbReference>
<dbReference type="RNAct" id="Q9D061">
    <property type="molecule type" value="protein"/>
</dbReference>
<dbReference type="Bgee" id="ENSMUSG00000033701">
    <property type="expression patterns" value="Expressed in spermatid and 262 other cell types or tissues"/>
</dbReference>
<dbReference type="ExpressionAtlas" id="Q9D061">
    <property type="expression patterns" value="baseline and differential"/>
</dbReference>
<dbReference type="GO" id="GO:0005737">
    <property type="term" value="C:cytoplasm"/>
    <property type="evidence" value="ECO:0000250"/>
    <property type="project" value="UniProtKB"/>
</dbReference>
<dbReference type="GO" id="GO:0005634">
    <property type="term" value="C:nucleus"/>
    <property type="evidence" value="ECO:0000250"/>
    <property type="project" value="UniProtKB"/>
</dbReference>
<dbReference type="GO" id="GO:0000062">
    <property type="term" value="F:fatty-acyl-CoA binding"/>
    <property type="evidence" value="ECO:0000250"/>
    <property type="project" value="UniProtKB"/>
</dbReference>
<dbReference type="GO" id="GO:0008289">
    <property type="term" value="F:lipid binding"/>
    <property type="evidence" value="ECO:0000250"/>
    <property type="project" value="UniProtKB"/>
</dbReference>
<dbReference type="FunFam" id="1.20.80.10:FF:000022">
    <property type="entry name" value="acyl-CoA-binding domain-containing protein 6 isoform X1"/>
    <property type="match status" value="1"/>
</dbReference>
<dbReference type="Gene3D" id="1.20.80.10">
    <property type="match status" value="1"/>
</dbReference>
<dbReference type="Gene3D" id="1.25.40.20">
    <property type="entry name" value="Ankyrin repeat-containing domain"/>
    <property type="match status" value="2"/>
</dbReference>
<dbReference type="InterPro" id="IPR000582">
    <property type="entry name" value="Acyl-CoA-binding_protein"/>
</dbReference>
<dbReference type="InterPro" id="IPR035984">
    <property type="entry name" value="Acyl-CoA-binding_sf"/>
</dbReference>
<dbReference type="InterPro" id="IPR002110">
    <property type="entry name" value="Ankyrin_rpt"/>
</dbReference>
<dbReference type="InterPro" id="IPR036770">
    <property type="entry name" value="Ankyrin_rpt-contain_sf"/>
</dbReference>
<dbReference type="InterPro" id="IPR014352">
    <property type="entry name" value="FERM/acyl-CoA-bd_prot_sf"/>
</dbReference>
<dbReference type="PANTHER" id="PTHR24119">
    <property type="entry name" value="ACYL-COA-BINDING DOMAIN-CONTAINING PROTEIN 6"/>
    <property type="match status" value="1"/>
</dbReference>
<dbReference type="PANTHER" id="PTHR24119:SF0">
    <property type="entry name" value="ACYL-COA-BINDING DOMAIN-CONTAINING PROTEIN 6"/>
    <property type="match status" value="1"/>
</dbReference>
<dbReference type="Pfam" id="PF00887">
    <property type="entry name" value="ACBP"/>
    <property type="match status" value="1"/>
</dbReference>
<dbReference type="Pfam" id="PF12796">
    <property type="entry name" value="Ank_2"/>
    <property type="match status" value="1"/>
</dbReference>
<dbReference type="PRINTS" id="PR00689">
    <property type="entry name" value="ACOABINDINGP"/>
</dbReference>
<dbReference type="PRINTS" id="PR01415">
    <property type="entry name" value="ANKYRIN"/>
</dbReference>
<dbReference type="SMART" id="SM00248">
    <property type="entry name" value="ANK"/>
    <property type="match status" value="3"/>
</dbReference>
<dbReference type="SUPFAM" id="SSF47027">
    <property type="entry name" value="Acyl-CoA binding protein"/>
    <property type="match status" value="1"/>
</dbReference>
<dbReference type="SUPFAM" id="SSF48403">
    <property type="entry name" value="Ankyrin repeat"/>
    <property type="match status" value="1"/>
</dbReference>
<dbReference type="PROSITE" id="PS51228">
    <property type="entry name" value="ACB_2"/>
    <property type="match status" value="1"/>
</dbReference>
<dbReference type="PROSITE" id="PS50297">
    <property type="entry name" value="ANK_REP_REGION"/>
    <property type="match status" value="1"/>
</dbReference>
<dbReference type="PROSITE" id="PS50088">
    <property type="entry name" value="ANK_REPEAT"/>
    <property type="match status" value="2"/>
</dbReference>
<sequence>MATPFLPSGATTGDSGGELSSGDDSGDMESFQTPEAEGTRSLAELFEKAAAHVQGLVQVASREQLLYLYARFKQVKVGNCNTPKPNFFDFEGKQKWEAWKALGDSSPSQAMQEYIAAVKKLDPGWNPQVSEKKGKEGSSGFGGPVVSSLYHEETIREEDKNIFDYCRENNIDHIAKAIKSKAADVNMTDEEGRALLHWACDRGHKELVKVLLQYEAGINCQDNEGQTALHYAAACEFLDIVELLLQSGADPTLRDQDGCLPEEVTGCKAVSLLLQRHRASKA</sequence>
<name>ACBD6_MOUSE</name>
<evidence type="ECO:0000250" key="1"/>
<evidence type="ECO:0000250" key="2">
    <source>
        <dbReference type="UniProtKB" id="Q5RJK8"/>
    </source>
</evidence>
<evidence type="ECO:0000250" key="3">
    <source>
        <dbReference type="UniProtKB" id="Q9BR61"/>
    </source>
</evidence>
<evidence type="ECO:0000255" key="4">
    <source>
        <dbReference type="PROSITE-ProRule" id="PRU00573"/>
    </source>
</evidence>
<evidence type="ECO:0000256" key="5">
    <source>
        <dbReference type="SAM" id="MobiDB-lite"/>
    </source>
</evidence>
<evidence type="ECO:0000303" key="6">
    <source>
    </source>
</evidence>
<evidence type="ECO:0000303" key="7">
    <source>
    </source>
</evidence>
<evidence type="ECO:0000305" key="8"/>
<comment type="function">
    <text evidence="3">Binds long-chain acyl-coenzyme A molecules with a strong preference for unsaturated C18:1-CoA, lower affinity for unsaturated C20:4-CoA, and very weak affinity for saturated C16:0-CoA. Does not bind fatty acids (By similarity). Plays a role in protein N-myristoylation (By similarity).</text>
</comment>
<comment type="subunit">
    <text evidence="3">Monomer.</text>
</comment>
<comment type="subcellular location">
    <subcellularLocation>
        <location evidence="3">Cytoplasm</location>
    </subcellularLocation>
    <subcellularLocation>
        <location evidence="3">Nucleus</location>
    </subcellularLocation>
</comment>
<comment type="alternative products">
    <event type="alternative splicing"/>
    <isoform>
        <id>Q9D061-1</id>
        <name>1</name>
        <sequence type="displayed"/>
    </isoform>
    <isoform>
        <id>Q9D061-2</id>
        <name>2</name>
        <sequence type="described" ref="VSP_018003 VSP_018004"/>
    </isoform>
    <isoform>
        <id>Q9D061-3</id>
        <name>3</name>
        <sequence type="described" ref="VSP_018002 VSP_018005"/>
    </isoform>
</comment>
<keyword id="KW-0025">Alternative splicing</keyword>
<keyword id="KW-0040">ANK repeat</keyword>
<keyword id="KW-0963">Cytoplasm</keyword>
<keyword id="KW-0446">Lipid-binding</keyword>
<keyword id="KW-0539">Nucleus</keyword>
<keyword id="KW-0597">Phosphoprotein</keyword>
<keyword id="KW-1185">Reference proteome</keyword>
<keyword id="KW-0677">Repeat</keyword>